<evidence type="ECO:0000255" key="1">
    <source>
        <dbReference type="HAMAP-Rule" id="MF_00258"/>
    </source>
</evidence>
<name>MURI_VIBVU</name>
<proteinExistence type="inferred from homology"/>
<keyword id="KW-0133">Cell shape</keyword>
<keyword id="KW-0961">Cell wall biogenesis/degradation</keyword>
<keyword id="KW-0413">Isomerase</keyword>
<keyword id="KW-0573">Peptidoglycan synthesis</keyword>
<accession>Q8DD39</accession>
<sequence length="263" mass="29156">MESSNQPNVLIFDSGVGGLSVFQEINKRLPEVNYYYLFDNQAYPYGELSQETLLARVEALVVKMTQQFAIDLVVIACNTASTIVLPTLRAKLPIPVVGVVPAIKPASLLANRAVGLIATPATVTRQYTHDLIRDFAHEKEVELLGSTRLVDIAEEKLRGRQVDQQELAMILKPMKHKVDVAVLGCTHFPLLKEEIQQVLGDEIILVDSGEAIARRVQSLLHQLSPQSTKTPWRIFSTAQPWDEAALNGSLKTMGFNAIELYPL</sequence>
<reference key="1">
    <citation type="submission" date="2002-12" db="EMBL/GenBank/DDBJ databases">
        <title>Complete genome sequence of Vibrio vulnificus CMCP6.</title>
        <authorList>
            <person name="Rhee J.H."/>
            <person name="Kim S.Y."/>
            <person name="Chung S.S."/>
            <person name="Kim J.J."/>
            <person name="Moon Y.H."/>
            <person name="Jeong H."/>
            <person name="Choy H.E."/>
        </authorList>
    </citation>
    <scope>NUCLEOTIDE SEQUENCE [LARGE SCALE GENOMIC DNA]</scope>
    <source>
        <strain>CMCP6</strain>
    </source>
</reference>
<protein>
    <recommendedName>
        <fullName evidence="1">Glutamate racemase</fullName>
        <ecNumber evidence="1">5.1.1.3</ecNumber>
    </recommendedName>
</protein>
<gene>
    <name evidence="1" type="primary">murI</name>
    <name type="ordered locus">VV1_1175</name>
</gene>
<dbReference type="EC" id="5.1.1.3" evidence="1"/>
<dbReference type="EMBL" id="AE016795">
    <property type="protein sequence ID" value="AAO09646.1"/>
    <property type="molecule type" value="Genomic_DNA"/>
</dbReference>
<dbReference type="RefSeq" id="WP_011079185.1">
    <property type="nucleotide sequence ID" value="NC_004459.3"/>
</dbReference>
<dbReference type="SMR" id="Q8DD39"/>
<dbReference type="KEGG" id="vvu:VV1_1175"/>
<dbReference type="HOGENOM" id="CLU_052344_2_0_6"/>
<dbReference type="UniPathway" id="UPA00219"/>
<dbReference type="Proteomes" id="UP000002275">
    <property type="component" value="Chromosome 1"/>
</dbReference>
<dbReference type="GO" id="GO:0008881">
    <property type="term" value="F:glutamate racemase activity"/>
    <property type="evidence" value="ECO:0007669"/>
    <property type="project" value="UniProtKB-UniRule"/>
</dbReference>
<dbReference type="GO" id="GO:0071555">
    <property type="term" value="P:cell wall organization"/>
    <property type="evidence" value="ECO:0007669"/>
    <property type="project" value="UniProtKB-KW"/>
</dbReference>
<dbReference type="GO" id="GO:0009252">
    <property type="term" value="P:peptidoglycan biosynthetic process"/>
    <property type="evidence" value="ECO:0007669"/>
    <property type="project" value="UniProtKB-UniRule"/>
</dbReference>
<dbReference type="GO" id="GO:0008360">
    <property type="term" value="P:regulation of cell shape"/>
    <property type="evidence" value="ECO:0007669"/>
    <property type="project" value="UniProtKB-KW"/>
</dbReference>
<dbReference type="FunFam" id="3.40.50.1860:FF:000001">
    <property type="entry name" value="Glutamate racemase"/>
    <property type="match status" value="1"/>
</dbReference>
<dbReference type="Gene3D" id="3.40.50.1860">
    <property type="match status" value="2"/>
</dbReference>
<dbReference type="HAMAP" id="MF_00258">
    <property type="entry name" value="Glu_racemase"/>
    <property type="match status" value="1"/>
</dbReference>
<dbReference type="InterPro" id="IPR015942">
    <property type="entry name" value="Asp/Glu/hydantoin_racemase"/>
</dbReference>
<dbReference type="InterPro" id="IPR001920">
    <property type="entry name" value="Asp/Glu_race"/>
</dbReference>
<dbReference type="InterPro" id="IPR018187">
    <property type="entry name" value="Asp/Glu_racemase_AS_1"/>
</dbReference>
<dbReference type="InterPro" id="IPR004391">
    <property type="entry name" value="Glu_race"/>
</dbReference>
<dbReference type="NCBIfam" id="TIGR00067">
    <property type="entry name" value="glut_race"/>
    <property type="match status" value="1"/>
</dbReference>
<dbReference type="PANTHER" id="PTHR21198">
    <property type="entry name" value="GLUTAMATE RACEMASE"/>
    <property type="match status" value="1"/>
</dbReference>
<dbReference type="PANTHER" id="PTHR21198:SF2">
    <property type="entry name" value="GLUTAMATE RACEMASE"/>
    <property type="match status" value="1"/>
</dbReference>
<dbReference type="Pfam" id="PF01177">
    <property type="entry name" value="Asp_Glu_race"/>
    <property type="match status" value="1"/>
</dbReference>
<dbReference type="SUPFAM" id="SSF53681">
    <property type="entry name" value="Aspartate/glutamate racemase"/>
    <property type="match status" value="2"/>
</dbReference>
<dbReference type="PROSITE" id="PS00923">
    <property type="entry name" value="ASP_GLU_RACEMASE_1"/>
    <property type="match status" value="1"/>
</dbReference>
<feature type="chain" id="PRO_0000095532" description="Glutamate racemase">
    <location>
        <begin position="1"/>
        <end position="263"/>
    </location>
</feature>
<feature type="active site" description="Proton donor/acceptor" evidence="1">
    <location>
        <position position="77"/>
    </location>
</feature>
<feature type="active site" description="Proton donor/acceptor" evidence="1">
    <location>
        <position position="185"/>
    </location>
</feature>
<feature type="binding site" evidence="1">
    <location>
        <begin position="13"/>
        <end position="14"/>
    </location>
    <ligand>
        <name>substrate</name>
    </ligand>
</feature>
<feature type="binding site" evidence="1">
    <location>
        <begin position="45"/>
        <end position="46"/>
    </location>
    <ligand>
        <name>substrate</name>
    </ligand>
</feature>
<feature type="binding site" evidence="1">
    <location>
        <begin position="78"/>
        <end position="79"/>
    </location>
    <ligand>
        <name>substrate</name>
    </ligand>
</feature>
<feature type="binding site" evidence="1">
    <location>
        <begin position="186"/>
        <end position="187"/>
    </location>
    <ligand>
        <name>substrate</name>
    </ligand>
</feature>
<organism>
    <name type="scientific">Vibrio vulnificus (strain CMCP6)</name>
    <dbReference type="NCBI Taxonomy" id="216895"/>
    <lineage>
        <taxon>Bacteria</taxon>
        <taxon>Pseudomonadati</taxon>
        <taxon>Pseudomonadota</taxon>
        <taxon>Gammaproteobacteria</taxon>
        <taxon>Vibrionales</taxon>
        <taxon>Vibrionaceae</taxon>
        <taxon>Vibrio</taxon>
    </lineage>
</organism>
<comment type="function">
    <text evidence="1">Provides the (R)-glutamate required for cell wall biosynthesis.</text>
</comment>
<comment type="catalytic activity">
    <reaction evidence="1">
        <text>L-glutamate = D-glutamate</text>
        <dbReference type="Rhea" id="RHEA:12813"/>
        <dbReference type="ChEBI" id="CHEBI:29985"/>
        <dbReference type="ChEBI" id="CHEBI:29986"/>
        <dbReference type="EC" id="5.1.1.3"/>
    </reaction>
</comment>
<comment type="pathway">
    <text evidence="1">Cell wall biogenesis; peptidoglycan biosynthesis.</text>
</comment>
<comment type="similarity">
    <text evidence="1">Belongs to the aspartate/glutamate racemases family.</text>
</comment>